<sequence length="503" mass="54694">MEFSVKSGSPEKQRSACIVVGVFEPRRLSPIAEQLDKISDGYISALLRRGELEGKVGQTLLLHHVPNILSERILLIGCGKERELDERQYKQVIQKTINTLNDTGSMEAVCFLTELHVKGRNTYWKVRQAVETAKETLYTFDQLKSNKVEPRRPLRKMVFNVPTRRELTSGERAIQHGLAVSSGIKAAKDLGNMPPNICNAGYLASQARQLADAFSTNITTRVIGEQQMKELGMNAYLAVGAGSRNESLMSVMEYKGNPNPDAKPIVLVGKGLTFDAGGISIKPAEGMDEMKYDMCGAATVYGVMRVVAELNLPLNVIGVLAGCENMPGGSAYRPGDVLTTMSGQTVEVLNTDAEGRLVLCDTLTYVERFDPELVIDVATLTGACVIALGHHITGLMSNHNPLAHELIGASEQAGDRAWRLPMSDEYYEQLDSNFADMANIGGRPGGAITAACFLSRFTRKYSWAHLDIAGTAWRSGKAKGATGRPVALLSQFLLNRAGLNGDD</sequence>
<name>AMPA_SERP5</name>
<protein>
    <recommendedName>
        <fullName evidence="1">Probable cytosol aminopeptidase</fullName>
        <ecNumber evidence="1">3.4.11.1</ecNumber>
    </recommendedName>
    <alternativeName>
        <fullName evidence="1">Leucine aminopeptidase</fullName>
        <shortName evidence="1">LAP</shortName>
        <ecNumber evidence="1">3.4.11.10</ecNumber>
    </alternativeName>
    <alternativeName>
        <fullName evidence="1">Leucyl aminopeptidase</fullName>
    </alternativeName>
</protein>
<accession>A8G978</accession>
<feature type="chain" id="PRO_1000058391" description="Probable cytosol aminopeptidase">
    <location>
        <begin position="1"/>
        <end position="503"/>
    </location>
</feature>
<feature type="active site" evidence="1">
    <location>
        <position position="282"/>
    </location>
</feature>
<feature type="active site" evidence="1">
    <location>
        <position position="356"/>
    </location>
</feature>
<feature type="binding site" evidence="1">
    <location>
        <position position="270"/>
    </location>
    <ligand>
        <name>Mn(2+)</name>
        <dbReference type="ChEBI" id="CHEBI:29035"/>
        <label>2</label>
    </ligand>
</feature>
<feature type="binding site" evidence="1">
    <location>
        <position position="275"/>
    </location>
    <ligand>
        <name>Mn(2+)</name>
        <dbReference type="ChEBI" id="CHEBI:29035"/>
        <label>1</label>
    </ligand>
</feature>
<feature type="binding site" evidence="1">
    <location>
        <position position="275"/>
    </location>
    <ligand>
        <name>Mn(2+)</name>
        <dbReference type="ChEBI" id="CHEBI:29035"/>
        <label>2</label>
    </ligand>
</feature>
<feature type="binding site" evidence="1">
    <location>
        <position position="293"/>
    </location>
    <ligand>
        <name>Mn(2+)</name>
        <dbReference type="ChEBI" id="CHEBI:29035"/>
        <label>2</label>
    </ligand>
</feature>
<feature type="binding site" evidence="1">
    <location>
        <position position="352"/>
    </location>
    <ligand>
        <name>Mn(2+)</name>
        <dbReference type="ChEBI" id="CHEBI:29035"/>
        <label>1</label>
    </ligand>
</feature>
<feature type="binding site" evidence="1">
    <location>
        <position position="354"/>
    </location>
    <ligand>
        <name>Mn(2+)</name>
        <dbReference type="ChEBI" id="CHEBI:29035"/>
        <label>1</label>
    </ligand>
</feature>
<feature type="binding site" evidence="1">
    <location>
        <position position="354"/>
    </location>
    <ligand>
        <name>Mn(2+)</name>
        <dbReference type="ChEBI" id="CHEBI:29035"/>
        <label>2</label>
    </ligand>
</feature>
<organism>
    <name type="scientific">Serratia proteamaculans (strain 568)</name>
    <dbReference type="NCBI Taxonomy" id="399741"/>
    <lineage>
        <taxon>Bacteria</taxon>
        <taxon>Pseudomonadati</taxon>
        <taxon>Pseudomonadota</taxon>
        <taxon>Gammaproteobacteria</taxon>
        <taxon>Enterobacterales</taxon>
        <taxon>Yersiniaceae</taxon>
        <taxon>Serratia</taxon>
    </lineage>
</organism>
<evidence type="ECO:0000255" key="1">
    <source>
        <dbReference type="HAMAP-Rule" id="MF_00181"/>
    </source>
</evidence>
<comment type="function">
    <text evidence="1">Presumably involved in the processing and regular turnover of intracellular proteins. Catalyzes the removal of unsubstituted N-terminal amino acids from various peptides.</text>
</comment>
<comment type="catalytic activity">
    <reaction evidence="1">
        <text>Release of an N-terminal amino acid, Xaa-|-Yaa-, in which Xaa is preferably Leu, but may be other amino acids including Pro although not Arg or Lys, and Yaa may be Pro. Amino acid amides and methyl esters are also readily hydrolyzed, but rates on arylamides are exceedingly low.</text>
        <dbReference type="EC" id="3.4.11.1"/>
    </reaction>
</comment>
<comment type="catalytic activity">
    <reaction evidence="1">
        <text>Release of an N-terminal amino acid, preferentially leucine, but not glutamic or aspartic acids.</text>
        <dbReference type="EC" id="3.4.11.10"/>
    </reaction>
</comment>
<comment type="cofactor">
    <cofactor evidence="1">
        <name>Mn(2+)</name>
        <dbReference type="ChEBI" id="CHEBI:29035"/>
    </cofactor>
    <text evidence="1">Binds 2 manganese ions per subunit.</text>
</comment>
<comment type="subcellular location">
    <subcellularLocation>
        <location evidence="1">Cytoplasm</location>
    </subcellularLocation>
</comment>
<comment type="similarity">
    <text evidence="1">Belongs to the peptidase M17 family.</text>
</comment>
<proteinExistence type="inferred from homology"/>
<gene>
    <name evidence="1" type="primary">pepA</name>
    <name type="ordered locus">Spro_0562</name>
</gene>
<dbReference type="EC" id="3.4.11.1" evidence="1"/>
<dbReference type="EC" id="3.4.11.10" evidence="1"/>
<dbReference type="EMBL" id="CP000826">
    <property type="protein sequence ID" value="ABV39668.1"/>
    <property type="molecule type" value="Genomic_DNA"/>
</dbReference>
<dbReference type="SMR" id="A8G978"/>
<dbReference type="STRING" id="399741.Spro_0562"/>
<dbReference type="MEROPS" id="M17.003"/>
<dbReference type="KEGG" id="spe:Spro_0562"/>
<dbReference type="eggNOG" id="COG0260">
    <property type="taxonomic scope" value="Bacteria"/>
</dbReference>
<dbReference type="HOGENOM" id="CLU_013734_2_2_6"/>
<dbReference type="OrthoDB" id="9809354at2"/>
<dbReference type="GO" id="GO:0005737">
    <property type="term" value="C:cytoplasm"/>
    <property type="evidence" value="ECO:0007669"/>
    <property type="project" value="UniProtKB-SubCell"/>
</dbReference>
<dbReference type="GO" id="GO:0030145">
    <property type="term" value="F:manganese ion binding"/>
    <property type="evidence" value="ECO:0007669"/>
    <property type="project" value="UniProtKB-UniRule"/>
</dbReference>
<dbReference type="GO" id="GO:0070006">
    <property type="term" value="F:metalloaminopeptidase activity"/>
    <property type="evidence" value="ECO:0007669"/>
    <property type="project" value="InterPro"/>
</dbReference>
<dbReference type="GO" id="GO:0006508">
    <property type="term" value="P:proteolysis"/>
    <property type="evidence" value="ECO:0007669"/>
    <property type="project" value="UniProtKB-KW"/>
</dbReference>
<dbReference type="CDD" id="cd00433">
    <property type="entry name" value="Peptidase_M17"/>
    <property type="match status" value="1"/>
</dbReference>
<dbReference type="FunFam" id="3.40.220.10:FF:000001">
    <property type="entry name" value="Probable cytosol aminopeptidase"/>
    <property type="match status" value="1"/>
</dbReference>
<dbReference type="FunFam" id="3.40.630.10:FF:000004">
    <property type="entry name" value="Probable cytosol aminopeptidase"/>
    <property type="match status" value="1"/>
</dbReference>
<dbReference type="Gene3D" id="3.40.220.10">
    <property type="entry name" value="Leucine Aminopeptidase, subunit E, domain 1"/>
    <property type="match status" value="1"/>
</dbReference>
<dbReference type="Gene3D" id="3.40.630.10">
    <property type="entry name" value="Zn peptidases"/>
    <property type="match status" value="1"/>
</dbReference>
<dbReference type="HAMAP" id="MF_00181">
    <property type="entry name" value="Cytosol_peptidase_M17"/>
    <property type="match status" value="1"/>
</dbReference>
<dbReference type="InterPro" id="IPR011356">
    <property type="entry name" value="Leucine_aapep/pepB"/>
</dbReference>
<dbReference type="InterPro" id="IPR043472">
    <property type="entry name" value="Macro_dom-like"/>
</dbReference>
<dbReference type="InterPro" id="IPR000819">
    <property type="entry name" value="Peptidase_M17_C"/>
</dbReference>
<dbReference type="InterPro" id="IPR023042">
    <property type="entry name" value="Peptidase_M17_leu_NH2_pept"/>
</dbReference>
<dbReference type="InterPro" id="IPR008283">
    <property type="entry name" value="Peptidase_M17_N"/>
</dbReference>
<dbReference type="NCBIfam" id="NF002072">
    <property type="entry name" value="PRK00913.1-1"/>
    <property type="match status" value="1"/>
</dbReference>
<dbReference type="NCBIfam" id="NF002074">
    <property type="entry name" value="PRK00913.1-4"/>
    <property type="match status" value="1"/>
</dbReference>
<dbReference type="PANTHER" id="PTHR11963:SF23">
    <property type="entry name" value="CYTOSOL AMINOPEPTIDASE"/>
    <property type="match status" value="1"/>
</dbReference>
<dbReference type="PANTHER" id="PTHR11963">
    <property type="entry name" value="LEUCINE AMINOPEPTIDASE-RELATED"/>
    <property type="match status" value="1"/>
</dbReference>
<dbReference type="Pfam" id="PF00883">
    <property type="entry name" value="Peptidase_M17"/>
    <property type="match status" value="1"/>
</dbReference>
<dbReference type="Pfam" id="PF02789">
    <property type="entry name" value="Peptidase_M17_N"/>
    <property type="match status" value="1"/>
</dbReference>
<dbReference type="PRINTS" id="PR00481">
    <property type="entry name" value="LAMNOPPTDASE"/>
</dbReference>
<dbReference type="SUPFAM" id="SSF52949">
    <property type="entry name" value="Macro domain-like"/>
    <property type="match status" value="1"/>
</dbReference>
<dbReference type="SUPFAM" id="SSF53187">
    <property type="entry name" value="Zn-dependent exopeptidases"/>
    <property type="match status" value="1"/>
</dbReference>
<dbReference type="PROSITE" id="PS00631">
    <property type="entry name" value="CYTOSOL_AP"/>
    <property type="match status" value="1"/>
</dbReference>
<reference key="1">
    <citation type="submission" date="2007-09" db="EMBL/GenBank/DDBJ databases">
        <title>Complete sequence of chromosome of Serratia proteamaculans 568.</title>
        <authorList>
            <consortium name="US DOE Joint Genome Institute"/>
            <person name="Copeland A."/>
            <person name="Lucas S."/>
            <person name="Lapidus A."/>
            <person name="Barry K."/>
            <person name="Glavina del Rio T."/>
            <person name="Dalin E."/>
            <person name="Tice H."/>
            <person name="Pitluck S."/>
            <person name="Chain P."/>
            <person name="Malfatti S."/>
            <person name="Shin M."/>
            <person name="Vergez L."/>
            <person name="Schmutz J."/>
            <person name="Larimer F."/>
            <person name="Land M."/>
            <person name="Hauser L."/>
            <person name="Kyrpides N."/>
            <person name="Kim E."/>
            <person name="Taghavi S."/>
            <person name="Newman L."/>
            <person name="Vangronsveld J."/>
            <person name="van der Lelie D."/>
            <person name="Richardson P."/>
        </authorList>
    </citation>
    <scope>NUCLEOTIDE SEQUENCE [LARGE SCALE GENOMIC DNA]</scope>
    <source>
        <strain>568</strain>
    </source>
</reference>
<keyword id="KW-0031">Aminopeptidase</keyword>
<keyword id="KW-0963">Cytoplasm</keyword>
<keyword id="KW-0378">Hydrolase</keyword>
<keyword id="KW-0464">Manganese</keyword>
<keyword id="KW-0479">Metal-binding</keyword>
<keyword id="KW-0645">Protease</keyword>